<keyword id="KW-0963">Cytoplasm</keyword>
<keyword id="KW-0276">Fatty acid metabolism</keyword>
<keyword id="KW-0378">Hydrolase</keyword>
<keyword id="KW-0443">Lipid metabolism</keyword>
<keyword id="KW-0597">Phosphoprotein</keyword>
<keyword id="KW-1185">Reference proteome</keyword>
<keyword id="KW-0719">Serine esterase</keyword>
<accession>O55137</accession>
<accession>Q549A9</accession>
<dbReference type="EC" id="3.1.2.-" evidence="2"/>
<dbReference type="EC" id="3.1.2.2" evidence="2"/>
<dbReference type="EMBL" id="AF180795">
    <property type="protein sequence ID" value="AAF13870.1"/>
    <property type="molecule type" value="Genomic_DNA"/>
</dbReference>
<dbReference type="EMBL" id="AF180793">
    <property type="protein sequence ID" value="AAF13870.1"/>
    <property type="status" value="JOINED"/>
    <property type="molecule type" value="Genomic_DNA"/>
</dbReference>
<dbReference type="EMBL" id="AF180794">
    <property type="protein sequence ID" value="AAF13870.1"/>
    <property type="status" value="JOINED"/>
    <property type="molecule type" value="Genomic_DNA"/>
</dbReference>
<dbReference type="EMBL" id="Y14004">
    <property type="protein sequence ID" value="CAA74327.1"/>
    <property type="molecule type" value="mRNA"/>
</dbReference>
<dbReference type="EMBL" id="BC028261">
    <property type="protein sequence ID" value="AAH28261.1"/>
    <property type="molecule type" value="mRNA"/>
</dbReference>
<dbReference type="CCDS" id="CCDS36487.1"/>
<dbReference type="RefSeq" id="NP_036136.1">
    <property type="nucleotide sequence ID" value="NM_012006.2"/>
</dbReference>
<dbReference type="SMR" id="O55137"/>
<dbReference type="FunCoup" id="O55137">
    <property type="interactions" value="472"/>
</dbReference>
<dbReference type="STRING" id="10090.ENSMUSP00000126448"/>
<dbReference type="ChEMBL" id="CHEMBL3259489"/>
<dbReference type="ESTHER" id="mouse-acot1">
    <property type="family name" value="Acyl-CoA_Thioesterase"/>
</dbReference>
<dbReference type="MEROPS" id="S09.A52"/>
<dbReference type="GlyGen" id="O55137">
    <property type="glycosylation" value="1 site, 1 O-linked glycan (1 site)"/>
</dbReference>
<dbReference type="iPTMnet" id="O55137"/>
<dbReference type="PhosphoSitePlus" id="O55137"/>
<dbReference type="SwissPalm" id="O55137"/>
<dbReference type="jPOST" id="O55137"/>
<dbReference type="PaxDb" id="10090-ENSMUSP00000126448"/>
<dbReference type="PeptideAtlas" id="O55137"/>
<dbReference type="ProteomicsDB" id="285647"/>
<dbReference type="Pumba" id="O55137"/>
<dbReference type="DNASU" id="26897"/>
<dbReference type="Ensembl" id="ENSMUST00000168120.3">
    <property type="protein sequence ID" value="ENSMUSP00000126448.2"/>
    <property type="gene ID" value="ENSMUSG00000072949.7"/>
</dbReference>
<dbReference type="GeneID" id="26897"/>
<dbReference type="KEGG" id="mmu:26897"/>
<dbReference type="UCSC" id="uc007oeb.1">
    <property type="organism name" value="mouse"/>
</dbReference>
<dbReference type="AGR" id="MGI:1349396"/>
<dbReference type="CTD" id="641371"/>
<dbReference type="MGI" id="MGI:1349396">
    <property type="gene designation" value="Acot1"/>
</dbReference>
<dbReference type="VEuPathDB" id="HostDB:ENSMUSG00000072949"/>
<dbReference type="eggNOG" id="ENOG502QQ8Z">
    <property type="taxonomic scope" value="Eukaryota"/>
</dbReference>
<dbReference type="GeneTree" id="ENSGT01010000222336"/>
<dbReference type="HOGENOM" id="CLU_029849_4_0_1"/>
<dbReference type="InParanoid" id="O55137"/>
<dbReference type="OMA" id="FRSIERF"/>
<dbReference type="OrthoDB" id="6347013at2759"/>
<dbReference type="PhylomeDB" id="O55137"/>
<dbReference type="TreeFam" id="TF314911"/>
<dbReference type="BRENDA" id="3.1.2.2">
    <property type="organism ID" value="3474"/>
</dbReference>
<dbReference type="Reactome" id="R-MMU-77289">
    <property type="pathway name" value="Mitochondrial Fatty Acid Beta-Oxidation"/>
</dbReference>
<dbReference type="Reactome" id="R-MMU-9033241">
    <property type="pathway name" value="Peroxisomal protein import"/>
</dbReference>
<dbReference type="Reactome" id="R-MMU-9837999">
    <property type="pathway name" value="Mitochondrial protein degradation"/>
</dbReference>
<dbReference type="SABIO-RK" id="O55137"/>
<dbReference type="UniPathway" id="UPA00199"/>
<dbReference type="BioGRID-ORCS" id="26897">
    <property type="hits" value="2 hits in 79 CRISPR screens"/>
</dbReference>
<dbReference type="ChiTaRS" id="Acot1">
    <property type="organism name" value="mouse"/>
</dbReference>
<dbReference type="PRO" id="PR:O55137"/>
<dbReference type="Proteomes" id="UP000000589">
    <property type="component" value="Chromosome 12"/>
</dbReference>
<dbReference type="RNAct" id="O55137">
    <property type="molecule type" value="protein"/>
</dbReference>
<dbReference type="Bgee" id="ENSMUSG00000072949">
    <property type="expression patterns" value="Expressed in epithelium of small intestine and 273 other cell types or tissues"/>
</dbReference>
<dbReference type="ExpressionAtlas" id="O55137">
    <property type="expression patterns" value="baseline and differential"/>
</dbReference>
<dbReference type="GO" id="GO:0005737">
    <property type="term" value="C:cytoplasm"/>
    <property type="evidence" value="ECO:0000304"/>
    <property type="project" value="MGI"/>
</dbReference>
<dbReference type="GO" id="GO:0005829">
    <property type="term" value="C:cytosol"/>
    <property type="evidence" value="ECO:0007669"/>
    <property type="project" value="UniProtKB-SubCell"/>
</dbReference>
<dbReference type="GO" id="GO:0005739">
    <property type="term" value="C:mitochondrion"/>
    <property type="evidence" value="ECO:0007005"/>
    <property type="project" value="MGI"/>
</dbReference>
<dbReference type="GO" id="GO:0052689">
    <property type="term" value="F:carboxylic ester hydrolase activity"/>
    <property type="evidence" value="ECO:0007669"/>
    <property type="project" value="UniProtKB-KW"/>
</dbReference>
<dbReference type="GO" id="GO:0047617">
    <property type="term" value="F:fatty acyl-CoA hydrolase activity"/>
    <property type="evidence" value="ECO:0000314"/>
    <property type="project" value="MGI"/>
</dbReference>
<dbReference type="GO" id="GO:0006637">
    <property type="term" value="P:acyl-CoA metabolic process"/>
    <property type="evidence" value="ECO:0000304"/>
    <property type="project" value="MGI"/>
</dbReference>
<dbReference type="GO" id="GO:0001676">
    <property type="term" value="P:long-chain fatty acid metabolic process"/>
    <property type="evidence" value="ECO:0000314"/>
    <property type="project" value="MGI"/>
</dbReference>
<dbReference type="FunFam" id="2.60.40.2240:FF:000001">
    <property type="entry name" value="acyl-coenzyme A thioesterase 4"/>
    <property type="match status" value="1"/>
</dbReference>
<dbReference type="FunFam" id="3.40.50.1820:FF:000024">
    <property type="entry name" value="acyl-coenzyme A thioesterase 4"/>
    <property type="match status" value="1"/>
</dbReference>
<dbReference type="Gene3D" id="2.60.40.2240">
    <property type="entry name" value="Acyl-CoA thioester hydrolase/BAAT N-terminal domain"/>
    <property type="match status" value="1"/>
</dbReference>
<dbReference type="Gene3D" id="3.40.50.1820">
    <property type="entry name" value="alpha/beta hydrolase"/>
    <property type="match status" value="1"/>
</dbReference>
<dbReference type="InterPro" id="IPR029058">
    <property type="entry name" value="AB_hydrolase_fold"/>
</dbReference>
<dbReference type="InterPro" id="IPR016662">
    <property type="entry name" value="Acyl-CoA_thioEstase_long-chain"/>
</dbReference>
<dbReference type="InterPro" id="IPR014940">
    <property type="entry name" value="BAAT_C"/>
</dbReference>
<dbReference type="InterPro" id="IPR006862">
    <property type="entry name" value="Thio_Ohase/aa_AcTrfase"/>
</dbReference>
<dbReference type="InterPro" id="IPR042490">
    <property type="entry name" value="Thio_Ohase/BAAT_N"/>
</dbReference>
<dbReference type="PANTHER" id="PTHR10824:SF12">
    <property type="entry name" value="ACYL-COENZYME A THIOESTERASE 1-RELATED"/>
    <property type="match status" value="1"/>
</dbReference>
<dbReference type="PANTHER" id="PTHR10824">
    <property type="entry name" value="ACYL-COENZYME A THIOESTERASE-RELATED"/>
    <property type="match status" value="1"/>
</dbReference>
<dbReference type="Pfam" id="PF08840">
    <property type="entry name" value="BAAT_C"/>
    <property type="match status" value="1"/>
</dbReference>
<dbReference type="Pfam" id="PF04775">
    <property type="entry name" value="Bile_Hydr_Trans"/>
    <property type="match status" value="1"/>
</dbReference>
<dbReference type="PIRSF" id="PIRSF016521">
    <property type="entry name" value="Acyl-CoA_hydro"/>
    <property type="match status" value="1"/>
</dbReference>
<dbReference type="SUPFAM" id="SSF53474">
    <property type="entry name" value="alpha/beta-Hydrolases"/>
    <property type="match status" value="1"/>
</dbReference>
<feature type="chain" id="PRO_0000202156" description="Acyl-coenzyme A thioesterase 1">
    <location>
        <begin position="1"/>
        <end position="419"/>
    </location>
</feature>
<feature type="active site" description="Charge relay system" evidence="5">
    <location>
        <position position="232"/>
    </location>
</feature>
<feature type="active site" description="Charge relay system" evidence="5">
    <location>
        <position position="324"/>
    </location>
</feature>
<feature type="active site" description="Charge relay system" evidence="5">
    <location>
        <position position="358"/>
    </location>
</feature>
<feature type="modified residue" description="Phosphoserine" evidence="1">
    <location>
        <position position="416"/>
    </location>
</feature>
<feature type="mutagenesis site" description="Abolishes activity." evidence="5">
    <original>S</original>
    <variation>A</variation>
    <location>
        <position position="232"/>
    </location>
</feature>
<feature type="mutagenesis site" description="Retains 2% of the initial activity; deacylation of the acyl-enzyme intermediate becomes rate-limiting." evidence="5">
    <original>S</original>
    <variation>C</variation>
    <location>
        <position position="232"/>
    </location>
</feature>
<feature type="mutagenesis site" description="Abolishes activity." evidence="5">
    <original>D</original>
    <variation>A</variation>
    <location>
        <position position="324"/>
    </location>
</feature>
<feature type="mutagenesis site" description="Abolishes activity." evidence="5">
    <original>H</original>
    <variation>Q</variation>
    <location>
        <position position="358"/>
    </location>
</feature>
<organism>
    <name type="scientific">Mus musculus</name>
    <name type="common">Mouse</name>
    <dbReference type="NCBI Taxonomy" id="10090"/>
    <lineage>
        <taxon>Eukaryota</taxon>
        <taxon>Metazoa</taxon>
        <taxon>Chordata</taxon>
        <taxon>Craniata</taxon>
        <taxon>Vertebrata</taxon>
        <taxon>Euteleostomi</taxon>
        <taxon>Mammalia</taxon>
        <taxon>Eutheria</taxon>
        <taxon>Euarchontoglires</taxon>
        <taxon>Glires</taxon>
        <taxon>Rodentia</taxon>
        <taxon>Myomorpha</taxon>
        <taxon>Muroidea</taxon>
        <taxon>Muridae</taxon>
        <taxon>Murinae</taxon>
        <taxon>Mus</taxon>
        <taxon>Mus</taxon>
    </lineage>
</organism>
<protein>
    <recommendedName>
        <fullName evidence="2">Acyl-coenzyme A thioesterase 1</fullName>
        <shortName evidence="2">Acyl-CoA thioesterase 1</shortName>
        <ecNumber evidence="2">3.1.2.-</ecNumber>
    </recommendedName>
    <alternativeName>
        <fullName>CTE-I</fullName>
    </alternativeName>
    <alternativeName>
        <fullName>Inducible cytosolic acyl-coenzyme A thioester hydrolase</fullName>
    </alternativeName>
    <alternativeName>
        <fullName>Long chain acyl-CoA thioester hydrolase</fullName>
        <shortName>Long chain acyl-CoA hydrolase</shortName>
    </alternativeName>
    <alternativeName>
        <fullName evidence="2">Palmitoyl-coenzyme A thioesterase</fullName>
        <ecNumber evidence="2">3.1.2.2</ecNumber>
    </alternativeName>
</protein>
<name>ACOT1_MOUSE</name>
<reference key="1">
    <citation type="journal article" date="1999" name="J. Biol. Chem.">
        <title>Peroxisome proliferator-induced long chain acyl-CoA thioesterases comprise a highly conserved novel multi-gene family involved in lipid metabolism.</title>
        <authorList>
            <person name="Hunt M.C."/>
            <person name="Nousiainen S.E.B."/>
            <person name="Huttunen M.K."/>
            <person name="Orii K.E."/>
            <person name="Svensson L.T."/>
            <person name="Alexson S.E.H."/>
        </authorList>
    </citation>
    <scope>NUCLEOTIDE SEQUENCE [GENOMIC DNA]</scope>
    <scope>TISSUE SPECIFICITY</scope>
    <source>
        <strain>C57BL/6J</strain>
    </source>
</reference>
<reference key="2">
    <citation type="journal article" date="2000" name="Cell Biochem. Biophys.">
        <title>Acyl-CoA thioesterases belong to a novel gene family of peroxisome proliferator-regulated enzymes involved in lipid metabolism.</title>
        <authorList>
            <person name="Hunt M.C."/>
            <person name="Lindquist P.J.G."/>
            <person name="Nousiainen S.E.B."/>
            <person name="Huttunen M.K."/>
            <person name="Orii K.E."/>
            <person name="Svensson L.T."/>
            <person name="Aoyama T."/>
            <person name="Hashimoto T."/>
            <person name="Diczfalusy U."/>
            <person name="Alexson S.E.H."/>
        </authorList>
    </citation>
    <scope>NUCLEOTIDE SEQUENCE [MRNA]</scope>
    <scope>CHARACTERIZATION</scope>
    <scope>INDUCTION</scope>
    <scope>TISSUE SPECIFICITY</scope>
</reference>
<reference key="3">
    <citation type="journal article" date="1998" name="Eur. J. Biochem.">
        <title>Molecular cloning of the peroxisome proliferator-induced 46-kDa cytosolic acyl-CoA thioesterase from mouse and rat liver --recombinant expression in Escherichia coli, tissue expression, and nutritional regulation.</title>
        <authorList>
            <person name="Lindquist P.J.G."/>
            <person name="Svensson L.T."/>
            <person name="Alexson S.E.H."/>
        </authorList>
    </citation>
    <scope>NUCLEOTIDE SEQUENCE [MRNA]</scope>
    <source>
        <strain>C57BL/6J</strain>
        <tissue>Liver</tissue>
    </source>
</reference>
<reference key="4">
    <citation type="journal article" date="2004" name="Genome Res.">
        <title>The status, quality, and expansion of the NIH full-length cDNA project: the Mammalian Gene Collection (MGC).</title>
        <authorList>
            <consortium name="The MGC Project Team"/>
        </authorList>
    </citation>
    <scope>NUCLEOTIDE SEQUENCE [LARGE SCALE MRNA]</scope>
    <source>
        <strain>FVB/N</strain>
        <tissue>Liver</tissue>
    </source>
</reference>
<reference key="5">
    <citation type="journal article" date="2002" name="J. Biol. Chem.">
        <title>The peroxisome proliferator-induced cytosolic type I acyl-CoA thioesterase (CTE-I) is a serine-histidine-aspartic acid alpha /beta hydrolase.</title>
        <authorList>
            <person name="Huhtinen K."/>
            <person name="O'Byrne J."/>
            <person name="Lindquist P.J.G."/>
            <person name="Contreras J.A."/>
            <person name="Alexson S.E.H."/>
        </authorList>
    </citation>
    <scope>FUNCTION</scope>
    <scope>CATALYTIC ACTIVITY</scope>
    <scope>SUBSTRATE SPECIFICITY</scope>
    <scope>BIOPHYSICOCHEMICAL PROPERTIES</scope>
    <scope>PATHWAY</scope>
    <scope>ACTIVE SITES</scope>
    <scope>MUTAGENESIS OF SER-232; ASP-324 AND HIS-358</scope>
</reference>
<reference key="6">
    <citation type="journal article" date="2010" name="Cell">
        <title>A tissue-specific atlas of mouse protein phosphorylation and expression.</title>
        <authorList>
            <person name="Huttlin E.L."/>
            <person name="Jedrychowski M.P."/>
            <person name="Elias J.E."/>
            <person name="Goswami T."/>
            <person name="Rad R."/>
            <person name="Beausoleil S.A."/>
            <person name="Villen J."/>
            <person name="Haas W."/>
            <person name="Sowa M.E."/>
            <person name="Gygi S.P."/>
        </authorList>
    </citation>
    <scope>IDENTIFICATION BY MASS SPECTROMETRY [LARGE SCALE ANALYSIS]</scope>
    <source>
        <tissue>Heart</tissue>
        <tissue>Kidney</tissue>
        <tissue>Liver</tissue>
        <tissue>Lung</tissue>
        <tissue>Spleen</tissue>
        <tissue>Testis</tissue>
    </source>
</reference>
<comment type="function">
    <text evidence="5">Catalyzes the hydrolysis of acyl-CoAs into free fatty acids and coenzyme A (CoASH), regulating their respective intracellular levels. More active towards saturated and unsaturated long chain fatty acyl-CoAs (C12-C20).</text>
</comment>
<comment type="catalytic activity">
    <reaction evidence="5">
        <text>hexadecanoyl-CoA + H2O = hexadecanoate + CoA + H(+)</text>
        <dbReference type="Rhea" id="RHEA:16645"/>
        <dbReference type="ChEBI" id="CHEBI:7896"/>
        <dbReference type="ChEBI" id="CHEBI:15377"/>
        <dbReference type="ChEBI" id="CHEBI:15378"/>
        <dbReference type="ChEBI" id="CHEBI:57287"/>
        <dbReference type="ChEBI" id="CHEBI:57379"/>
        <dbReference type="EC" id="3.1.2.2"/>
    </reaction>
    <physiologicalReaction direction="left-to-right" evidence="7">
        <dbReference type="Rhea" id="RHEA:16646"/>
    </physiologicalReaction>
</comment>
<comment type="catalytic activity">
    <reaction evidence="5">
        <text>decanoyl-CoA + H2O = decanoate + CoA + H(+)</text>
        <dbReference type="Rhea" id="RHEA:40059"/>
        <dbReference type="ChEBI" id="CHEBI:15377"/>
        <dbReference type="ChEBI" id="CHEBI:15378"/>
        <dbReference type="ChEBI" id="CHEBI:27689"/>
        <dbReference type="ChEBI" id="CHEBI:57287"/>
        <dbReference type="ChEBI" id="CHEBI:61430"/>
    </reaction>
    <physiologicalReaction direction="left-to-right" evidence="7">
        <dbReference type="Rhea" id="RHEA:40060"/>
    </physiologicalReaction>
</comment>
<comment type="catalytic activity">
    <reaction evidence="5">
        <text>dodecanoyl-CoA + H2O = dodecanoate + CoA + H(+)</text>
        <dbReference type="Rhea" id="RHEA:30135"/>
        <dbReference type="ChEBI" id="CHEBI:15377"/>
        <dbReference type="ChEBI" id="CHEBI:15378"/>
        <dbReference type="ChEBI" id="CHEBI:18262"/>
        <dbReference type="ChEBI" id="CHEBI:57287"/>
        <dbReference type="ChEBI" id="CHEBI:57375"/>
    </reaction>
    <physiologicalReaction direction="left-to-right" evidence="7">
        <dbReference type="Rhea" id="RHEA:30136"/>
    </physiologicalReaction>
</comment>
<comment type="catalytic activity">
    <reaction evidence="5">
        <text>tetradecanoyl-CoA + H2O = tetradecanoate + CoA + H(+)</text>
        <dbReference type="Rhea" id="RHEA:40119"/>
        <dbReference type="ChEBI" id="CHEBI:15377"/>
        <dbReference type="ChEBI" id="CHEBI:15378"/>
        <dbReference type="ChEBI" id="CHEBI:30807"/>
        <dbReference type="ChEBI" id="CHEBI:57287"/>
        <dbReference type="ChEBI" id="CHEBI:57385"/>
    </reaction>
    <physiologicalReaction direction="left-to-right" evidence="7">
        <dbReference type="Rhea" id="RHEA:40120"/>
    </physiologicalReaction>
</comment>
<comment type="catalytic activity">
    <reaction evidence="5">
        <text>octadecanoyl-CoA + H2O = octadecanoate + CoA + H(+)</text>
        <dbReference type="Rhea" id="RHEA:30139"/>
        <dbReference type="ChEBI" id="CHEBI:15377"/>
        <dbReference type="ChEBI" id="CHEBI:15378"/>
        <dbReference type="ChEBI" id="CHEBI:25629"/>
        <dbReference type="ChEBI" id="CHEBI:57287"/>
        <dbReference type="ChEBI" id="CHEBI:57394"/>
    </reaction>
    <physiologicalReaction direction="left-to-right" evidence="7">
        <dbReference type="Rhea" id="RHEA:30140"/>
    </physiologicalReaction>
</comment>
<comment type="catalytic activity">
    <reaction evidence="5">
        <text>eicosanoyl-CoA + H2O = eicosanoate + CoA + H(+)</text>
        <dbReference type="Rhea" id="RHEA:40147"/>
        <dbReference type="ChEBI" id="CHEBI:15377"/>
        <dbReference type="ChEBI" id="CHEBI:15378"/>
        <dbReference type="ChEBI" id="CHEBI:32360"/>
        <dbReference type="ChEBI" id="CHEBI:57287"/>
        <dbReference type="ChEBI" id="CHEBI:57380"/>
    </reaction>
    <physiologicalReaction direction="left-to-right" evidence="7">
        <dbReference type="Rhea" id="RHEA:40148"/>
    </physiologicalReaction>
</comment>
<comment type="catalytic activity">
    <reaction evidence="5">
        <text>(9Z)-octadecenoyl-CoA + H2O = (9Z)-octadecenoate + CoA + H(+)</text>
        <dbReference type="Rhea" id="RHEA:40139"/>
        <dbReference type="ChEBI" id="CHEBI:15377"/>
        <dbReference type="ChEBI" id="CHEBI:15378"/>
        <dbReference type="ChEBI" id="CHEBI:30823"/>
        <dbReference type="ChEBI" id="CHEBI:57287"/>
        <dbReference type="ChEBI" id="CHEBI:57387"/>
    </reaction>
    <physiologicalReaction direction="left-to-right" evidence="7">
        <dbReference type="Rhea" id="RHEA:40140"/>
    </physiologicalReaction>
</comment>
<comment type="catalytic activity">
    <reaction evidence="5">
        <text>(9Z)-hexadecenoyl-CoA + H2O = (9Z)-hexadecenoate + CoA + H(+)</text>
        <dbReference type="Rhea" id="RHEA:40131"/>
        <dbReference type="ChEBI" id="CHEBI:15377"/>
        <dbReference type="ChEBI" id="CHEBI:15378"/>
        <dbReference type="ChEBI" id="CHEBI:32372"/>
        <dbReference type="ChEBI" id="CHEBI:57287"/>
        <dbReference type="ChEBI" id="CHEBI:61540"/>
    </reaction>
    <physiologicalReaction direction="left-to-right" evidence="7">
        <dbReference type="Rhea" id="RHEA:40132"/>
    </physiologicalReaction>
</comment>
<comment type="catalytic activity">
    <reaction evidence="5">
        <text>(9E)-octadecenoyl-CoA + H2O = (9E)-octadecenoate + CoA + H(+)</text>
        <dbReference type="Rhea" id="RHEA:40723"/>
        <dbReference type="ChEBI" id="CHEBI:15377"/>
        <dbReference type="ChEBI" id="CHEBI:15378"/>
        <dbReference type="ChEBI" id="CHEBI:30825"/>
        <dbReference type="ChEBI" id="CHEBI:57287"/>
        <dbReference type="ChEBI" id="CHEBI:77537"/>
    </reaction>
    <physiologicalReaction direction="left-to-right" evidence="7">
        <dbReference type="Rhea" id="RHEA:40724"/>
    </physiologicalReaction>
</comment>
<comment type="biophysicochemical properties">
    <kinetics>
        <KM evidence="5">2.6 uM for C16:0-acyl-CoA</KM>
        <KM evidence="5">15.2 uM for C10:0-acyl-CoA</KM>
        <KM evidence="5">2.6 uM for C12:0-acyl-CoA</KM>
        <KM evidence="5">3.5 uM for C14:0-acyl-CoA</KM>
        <KM evidence="5">0.5 uM for C20:0-acyl-CoA</KM>
        <KM evidence="5">1.5 uM for C14:1-acyl-CoA</KM>
        <KM evidence="5">1.1 uM for C16:1-acyl-CoA</KM>
        <KM evidence="5">2.4 uM for C18:1(cis)-acyl-CoA</KM>
        <KM evidence="5">1.8 uM for C18:1(trans)-acyl-CoA</KM>
        <KM evidence="5">4.5 uM for C18:2-acyl-CoA</KM>
        <KM evidence="5">3 uM for C20:4-acyl-CoA</KM>
        <Vmax evidence="5">1.2 umol/min/mg enzyme with C16:0-acyl-CoA as substrate</Vmax>
        <Vmax evidence="5">0.192 umol/min/mg enzyme with C10:0-acyl-CoA as substrate</Vmax>
        <Vmax evidence="5">0.78 umol/min/mg enzyme with C12:0-acyl-CoA as substrate</Vmax>
        <Vmax evidence="5">1.68 umol/min/mg enzyme with C14:0-acyl-CoA as substrate</Vmax>
        <Vmax evidence="5">0.692 umol/min/mg enzyme with C18:0-acyl-CoA as substrate</Vmax>
        <Vmax evidence="5">0.245 umol/min/mg enzyme with C20:0-acyl-CoA as substrate</Vmax>
        <Vmax evidence="5">0.745 umol/min/mg enzyme with C14:1-acyl-CoA as substrate</Vmax>
        <Vmax evidence="5">0.621 umol/min/mg enzyme with C16:1-acyl-CoA as substrate</Vmax>
        <Vmax evidence="5">0.176 umol/min/mg enzyme with C18:1(cis)-acyl-CoA as substrate</Vmax>
        <Vmax evidence="5">0.188 umol/min/mg enzyme with C18:1(trans)-acyl-CoA as substrate</Vmax>
        <Vmax evidence="5">0.316 umol/min/mg enzyme with C18:2-acyl-CoA as substrate</Vmax>
        <Vmax evidence="5">0.007 umol/min/mg enzyme with C20:4-acyl-CoA as substrate</Vmax>
    </kinetics>
</comment>
<comment type="pathway">
    <text evidence="7">Lipid metabolism; fatty acid metabolism.</text>
</comment>
<comment type="subunit">
    <text>Monomer.</text>
</comment>
<comment type="subcellular location">
    <subcellularLocation>
        <location evidence="1">Cytoplasm</location>
        <location evidence="1">Cytosol</location>
    </subcellularLocation>
</comment>
<comment type="tissue specificity">
    <text evidence="3 4">Expressed in heart, kidney, brown adipose tissue, white adipose tissue, adrenal gland and muscle.</text>
</comment>
<comment type="induction">
    <text evidence="4">In the liver, by peroxisome proliferator (Clofibrate) treatment, via the peroxisome proliferator-activated receptors (PPARs) or fasting for 24 hours.</text>
</comment>
<comment type="similarity">
    <text evidence="6">Belongs to the C/M/P thioester hydrolase family.</text>
</comment>
<sequence>MEATLNLEPSGRSCWDEPLSIAVRGLAPEQPVTLRSVLRDEKGALFRAHARYRADSHGELDLARTPALGGSFSGLEPMGLLWAMEPDRPFWRLVKRDVQTPFVVELEVLDGHEPDGGQRLAHAVHERHFLAPGVRRVPVREGRVRATLFLPPEPGPFPGIIDLFGVGGGLLEYRASLLAGKGFAVMALAYYNYDDLPKNMETMHMEYFEEAVNYLRSHPEVKGPGIGLLGISKGGELGLAMASFLKGITAAVVINGSVAAVGNTISYKDETIPPVTILRNQVKMTKDGLKDVVDALQSPLVDKKSFIPVERSDTTFLFLVGQDDHNWKSEFYADEISKRLQAHGKEKPQIICYPAAGHYIEPPYFPLCSAGMHLLVGANITFGGEPKPHAMAQLDAWQQLQTFFHKQLGSECLHVSPKI</sequence>
<gene>
    <name type="primary">Acot1</name>
    <name type="synonym">Cte1</name>
</gene>
<proteinExistence type="evidence at protein level"/>
<evidence type="ECO:0000250" key="1">
    <source>
        <dbReference type="UniProtKB" id="O88267"/>
    </source>
</evidence>
<evidence type="ECO:0000250" key="2">
    <source>
        <dbReference type="UniProtKB" id="Q86TX2"/>
    </source>
</evidence>
<evidence type="ECO:0000269" key="3">
    <source>
    </source>
</evidence>
<evidence type="ECO:0000269" key="4">
    <source>
    </source>
</evidence>
<evidence type="ECO:0000269" key="5">
    <source>
    </source>
</evidence>
<evidence type="ECO:0000305" key="6"/>
<evidence type="ECO:0000305" key="7">
    <source>
    </source>
</evidence>